<comment type="function">
    <text evidence="1">NDH-1 shuttles electrons from NADH, via FMN and iron-sulfur (Fe-S) centers, to quinones in the respiratory chain. The immediate electron acceptor for the enzyme in this species is believed to be ubiquinone. Couples the redox reaction to proton translocation (for every two electrons transferred, four hydrogen ions are translocated across the cytoplasmic membrane), and thus conserves the redox energy in a proton gradient.</text>
</comment>
<comment type="catalytic activity">
    <reaction evidence="1">
        <text>a quinone + NADH + 5 H(+)(in) = a quinol + NAD(+) + 4 H(+)(out)</text>
        <dbReference type="Rhea" id="RHEA:57888"/>
        <dbReference type="ChEBI" id="CHEBI:15378"/>
        <dbReference type="ChEBI" id="CHEBI:24646"/>
        <dbReference type="ChEBI" id="CHEBI:57540"/>
        <dbReference type="ChEBI" id="CHEBI:57945"/>
        <dbReference type="ChEBI" id="CHEBI:132124"/>
    </reaction>
</comment>
<comment type="cofactor">
    <cofactor evidence="1">
        <name>[4Fe-4S] cluster</name>
        <dbReference type="ChEBI" id="CHEBI:49883"/>
    </cofactor>
    <text evidence="1">Binds 2 [4Fe-4S] clusters per subunit.</text>
</comment>
<comment type="subunit">
    <text evidence="1">NDH-1 is composed of 14 different subunits. Subunits NuoA, H, J, K, L, M, N constitute the membrane sector of the complex.</text>
</comment>
<comment type="subcellular location">
    <subcellularLocation>
        <location evidence="1">Cell inner membrane</location>
        <topology evidence="1">Peripheral membrane protein</topology>
    </subcellularLocation>
</comment>
<comment type="similarity">
    <text evidence="1">Belongs to the complex I 23 kDa subunit family.</text>
</comment>
<protein>
    <recommendedName>
        <fullName evidence="1">NADH-quinone oxidoreductase subunit I</fullName>
        <ecNumber evidence="1">7.1.1.-</ecNumber>
    </recommendedName>
    <alternativeName>
        <fullName evidence="1">NADH dehydrogenase I subunit I</fullName>
    </alternativeName>
    <alternativeName>
        <fullName evidence="1">NDH-1 subunit I</fullName>
    </alternativeName>
</protein>
<name>NUOI_FRAT1</name>
<evidence type="ECO:0000255" key="1">
    <source>
        <dbReference type="HAMAP-Rule" id="MF_01351"/>
    </source>
</evidence>
<sequence>MRNITNFLKTFLLWELLKGLKVTGKHFFTRKVTVQYPDEKTPISNRFRGLHALRRYENGEERCIACKLCEVVCPALAITINSTEREDGTRRTSSYEMDLFKCIFCGYCEESCPVDSIVETNILEYHFEERGENIMTKAKLLAIGDKYEAQIAADRLQDKDFR</sequence>
<dbReference type="EC" id="7.1.1.-" evidence="1"/>
<dbReference type="EMBL" id="AM286280">
    <property type="protein sequence ID" value="CAL08055.1"/>
    <property type="molecule type" value="Genomic_DNA"/>
</dbReference>
<dbReference type="RefSeq" id="WP_003017376.1">
    <property type="nucleotide sequence ID" value="NC_008245.1"/>
</dbReference>
<dbReference type="SMR" id="Q14K30"/>
<dbReference type="KEGG" id="ftf:FTF0039"/>
<dbReference type="HOGENOM" id="CLU_067218_5_1_6"/>
<dbReference type="GO" id="GO:0005886">
    <property type="term" value="C:plasma membrane"/>
    <property type="evidence" value="ECO:0007669"/>
    <property type="project" value="UniProtKB-SubCell"/>
</dbReference>
<dbReference type="GO" id="GO:0051539">
    <property type="term" value="F:4 iron, 4 sulfur cluster binding"/>
    <property type="evidence" value="ECO:0007669"/>
    <property type="project" value="UniProtKB-KW"/>
</dbReference>
<dbReference type="GO" id="GO:0005506">
    <property type="term" value="F:iron ion binding"/>
    <property type="evidence" value="ECO:0007669"/>
    <property type="project" value="UniProtKB-UniRule"/>
</dbReference>
<dbReference type="GO" id="GO:0050136">
    <property type="term" value="F:NADH:ubiquinone reductase (non-electrogenic) activity"/>
    <property type="evidence" value="ECO:0007669"/>
    <property type="project" value="UniProtKB-UniRule"/>
</dbReference>
<dbReference type="GO" id="GO:0048038">
    <property type="term" value="F:quinone binding"/>
    <property type="evidence" value="ECO:0007669"/>
    <property type="project" value="UniProtKB-KW"/>
</dbReference>
<dbReference type="GO" id="GO:0009060">
    <property type="term" value="P:aerobic respiration"/>
    <property type="evidence" value="ECO:0007669"/>
    <property type="project" value="TreeGrafter"/>
</dbReference>
<dbReference type="FunFam" id="3.30.70.3270:FF:000003">
    <property type="entry name" value="NADH-quinone oxidoreductase subunit I"/>
    <property type="match status" value="1"/>
</dbReference>
<dbReference type="Gene3D" id="3.30.70.3270">
    <property type="match status" value="1"/>
</dbReference>
<dbReference type="HAMAP" id="MF_01351">
    <property type="entry name" value="NDH1_NuoI"/>
    <property type="match status" value="1"/>
</dbReference>
<dbReference type="InterPro" id="IPR017896">
    <property type="entry name" value="4Fe4S_Fe-S-bd"/>
</dbReference>
<dbReference type="InterPro" id="IPR017900">
    <property type="entry name" value="4Fe4S_Fe_S_CS"/>
</dbReference>
<dbReference type="InterPro" id="IPR010226">
    <property type="entry name" value="NADH_quinone_OxRdtase_chainI"/>
</dbReference>
<dbReference type="NCBIfam" id="TIGR01971">
    <property type="entry name" value="NuoI"/>
    <property type="match status" value="1"/>
</dbReference>
<dbReference type="NCBIfam" id="NF004538">
    <property type="entry name" value="PRK05888.1-4"/>
    <property type="match status" value="1"/>
</dbReference>
<dbReference type="PANTHER" id="PTHR10849:SF20">
    <property type="entry name" value="NADH DEHYDROGENASE [UBIQUINONE] IRON-SULFUR PROTEIN 8, MITOCHONDRIAL"/>
    <property type="match status" value="1"/>
</dbReference>
<dbReference type="PANTHER" id="PTHR10849">
    <property type="entry name" value="NADH DEHYDROGENASE UBIQUINONE IRON-SULFUR PROTEIN 8, MITOCHONDRIAL"/>
    <property type="match status" value="1"/>
</dbReference>
<dbReference type="Pfam" id="PF12838">
    <property type="entry name" value="Fer4_7"/>
    <property type="match status" value="1"/>
</dbReference>
<dbReference type="SUPFAM" id="SSF54862">
    <property type="entry name" value="4Fe-4S ferredoxins"/>
    <property type="match status" value="1"/>
</dbReference>
<dbReference type="PROSITE" id="PS00198">
    <property type="entry name" value="4FE4S_FER_1"/>
    <property type="match status" value="2"/>
</dbReference>
<dbReference type="PROSITE" id="PS51379">
    <property type="entry name" value="4FE4S_FER_2"/>
    <property type="match status" value="2"/>
</dbReference>
<reference key="1">
    <citation type="journal article" date="2007" name="PLoS ONE">
        <title>Genome sequencing shows that European isolates of Francisella tularensis subspecies tularensis are almost identical to US laboratory strain Schu S4.</title>
        <authorList>
            <person name="Chaudhuri R.R."/>
            <person name="Ren C.-P."/>
            <person name="Desmond L."/>
            <person name="Vincent G.A."/>
            <person name="Silman N.J."/>
            <person name="Brehm J.K."/>
            <person name="Elmore M.J."/>
            <person name="Hudson M.J."/>
            <person name="Forsman M."/>
            <person name="Isherwood K.E."/>
            <person name="Gurycova D."/>
            <person name="Minton N.P."/>
            <person name="Titball R.W."/>
            <person name="Pallen M.J."/>
            <person name="Vipond R."/>
        </authorList>
    </citation>
    <scope>NUCLEOTIDE SEQUENCE [LARGE SCALE GENOMIC DNA]</scope>
    <source>
        <strain>FSC 198</strain>
    </source>
</reference>
<feature type="chain" id="PRO_0000298497" description="NADH-quinone oxidoreductase subunit I">
    <location>
        <begin position="1"/>
        <end position="162"/>
    </location>
</feature>
<feature type="domain" description="4Fe-4S ferredoxin-type 1" evidence="1">
    <location>
        <begin position="54"/>
        <end position="83"/>
    </location>
</feature>
<feature type="domain" description="4Fe-4S ferredoxin-type 2" evidence="1">
    <location>
        <begin position="93"/>
        <end position="122"/>
    </location>
</feature>
<feature type="binding site" evidence="1">
    <location>
        <position position="63"/>
    </location>
    <ligand>
        <name>[4Fe-4S] cluster</name>
        <dbReference type="ChEBI" id="CHEBI:49883"/>
        <label>1</label>
    </ligand>
</feature>
<feature type="binding site" evidence="1">
    <location>
        <position position="66"/>
    </location>
    <ligand>
        <name>[4Fe-4S] cluster</name>
        <dbReference type="ChEBI" id="CHEBI:49883"/>
        <label>1</label>
    </ligand>
</feature>
<feature type="binding site" evidence="1">
    <location>
        <position position="69"/>
    </location>
    <ligand>
        <name>[4Fe-4S] cluster</name>
        <dbReference type="ChEBI" id="CHEBI:49883"/>
        <label>1</label>
    </ligand>
</feature>
<feature type="binding site" evidence="1">
    <location>
        <position position="73"/>
    </location>
    <ligand>
        <name>[4Fe-4S] cluster</name>
        <dbReference type="ChEBI" id="CHEBI:49883"/>
        <label>2</label>
    </ligand>
</feature>
<feature type="binding site" evidence="1">
    <location>
        <position position="102"/>
    </location>
    <ligand>
        <name>[4Fe-4S] cluster</name>
        <dbReference type="ChEBI" id="CHEBI:49883"/>
        <label>2</label>
    </ligand>
</feature>
<feature type="binding site" evidence="1">
    <location>
        <position position="105"/>
    </location>
    <ligand>
        <name>[4Fe-4S] cluster</name>
        <dbReference type="ChEBI" id="CHEBI:49883"/>
        <label>2</label>
    </ligand>
</feature>
<feature type="binding site" evidence="1">
    <location>
        <position position="108"/>
    </location>
    <ligand>
        <name>[4Fe-4S] cluster</name>
        <dbReference type="ChEBI" id="CHEBI:49883"/>
        <label>2</label>
    </ligand>
</feature>
<feature type="binding site" evidence="1">
    <location>
        <position position="112"/>
    </location>
    <ligand>
        <name>[4Fe-4S] cluster</name>
        <dbReference type="ChEBI" id="CHEBI:49883"/>
        <label>1</label>
    </ligand>
</feature>
<organism>
    <name type="scientific">Francisella tularensis subsp. tularensis (strain FSC 198)</name>
    <dbReference type="NCBI Taxonomy" id="393115"/>
    <lineage>
        <taxon>Bacteria</taxon>
        <taxon>Pseudomonadati</taxon>
        <taxon>Pseudomonadota</taxon>
        <taxon>Gammaproteobacteria</taxon>
        <taxon>Thiotrichales</taxon>
        <taxon>Francisellaceae</taxon>
        <taxon>Francisella</taxon>
    </lineage>
</organism>
<proteinExistence type="inferred from homology"/>
<keyword id="KW-0004">4Fe-4S</keyword>
<keyword id="KW-0997">Cell inner membrane</keyword>
<keyword id="KW-1003">Cell membrane</keyword>
<keyword id="KW-0408">Iron</keyword>
<keyword id="KW-0411">Iron-sulfur</keyword>
<keyword id="KW-0472">Membrane</keyword>
<keyword id="KW-0479">Metal-binding</keyword>
<keyword id="KW-0520">NAD</keyword>
<keyword id="KW-0874">Quinone</keyword>
<keyword id="KW-0677">Repeat</keyword>
<keyword id="KW-1278">Translocase</keyword>
<keyword id="KW-0830">Ubiquinone</keyword>
<accession>Q14K30</accession>
<gene>
    <name evidence="1" type="primary">nuoI</name>
    <name type="ordered locus">FTF0039</name>
</gene>